<reference key="1">
    <citation type="journal article" date="2005" name="Science">
        <title>The transcriptional landscape of the mammalian genome.</title>
        <authorList>
            <person name="Carninci P."/>
            <person name="Kasukawa T."/>
            <person name="Katayama S."/>
            <person name="Gough J."/>
            <person name="Frith M.C."/>
            <person name="Maeda N."/>
            <person name="Oyama R."/>
            <person name="Ravasi T."/>
            <person name="Lenhard B."/>
            <person name="Wells C."/>
            <person name="Kodzius R."/>
            <person name="Shimokawa K."/>
            <person name="Bajic V.B."/>
            <person name="Brenner S.E."/>
            <person name="Batalov S."/>
            <person name="Forrest A.R."/>
            <person name="Zavolan M."/>
            <person name="Davis M.J."/>
            <person name="Wilming L.G."/>
            <person name="Aidinis V."/>
            <person name="Allen J.E."/>
            <person name="Ambesi-Impiombato A."/>
            <person name="Apweiler R."/>
            <person name="Aturaliya R.N."/>
            <person name="Bailey T.L."/>
            <person name="Bansal M."/>
            <person name="Baxter L."/>
            <person name="Beisel K.W."/>
            <person name="Bersano T."/>
            <person name="Bono H."/>
            <person name="Chalk A.M."/>
            <person name="Chiu K.P."/>
            <person name="Choudhary V."/>
            <person name="Christoffels A."/>
            <person name="Clutterbuck D.R."/>
            <person name="Crowe M.L."/>
            <person name="Dalla E."/>
            <person name="Dalrymple B.P."/>
            <person name="de Bono B."/>
            <person name="Della Gatta G."/>
            <person name="di Bernardo D."/>
            <person name="Down T."/>
            <person name="Engstrom P."/>
            <person name="Fagiolini M."/>
            <person name="Faulkner G."/>
            <person name="Fletcher C.F."/>
            <person name="Fukushima T."/>
            <person name="Furuno M."/>
            <person name="Futaki S."/>
            <person name="Gariboldi M."/>
            <person name="Georgii-Hemming P."/>
            <person name="Gingeras T.R."/>
            <person name="Gojobori T."/>
            <person name="Green R.E."/>
            <person name="Gustincich S."/>
            <person name="Harbers M."/>
            <person name="Hayashi Y."/>
            <person name="Hensch T.K."/>
            <person name="Hirokawa N."/>
            <person name="Hill D."/>
            <person name="Huminiecki L."/>
            <person name="Iacono M."/>
            <person name="Ikeo K."/>
            <person name="Iwama A."/>
            <person name="Ishikawa T."/>
            <person name="Jakt M."/>
            <person name="Kanapin A."/>
            <person name="Katoh M."/>
            <person name="Kawasawa Y."/>
            <person name="Kelso J."/>
            <person name="Kitamura H."/>
            <person name="Kitano H."/>
            <person name="Kollias G."/>
            <person name="Krishnan S.P."/>
            <person name="Kruger A."/>
            <person name="Kummerfeld S.K."/>
            <person name="Kurochkin I.V."/>
            <person name="Lareau L.F."/>
            <person name="Lazarevic D."/>
            <person name="Lipovich L."/>
            <person name="Liu J."/>
            <person name="Liuni S."/>
            <person name="McWilliam S."/>
            <person name="Madan Babu M."/>
            <person name="Madera M."/>
            <person name="Marchionni L."/>
            <person name="Matsuda H."/>
            <person name="Matsuzawa S."/>
            <person name="Miki H."/>
            <person name="Mignone F."/>
            <person name="Miyake S."/>
            <person name="Morris K."/>
            <person name="Mottagui-Tabar S."/>
            <person name="Mulder N."/>
            <person name="Nakano N."/>
            <person name="Nakauchi H."/>
            <person name="Ng P."/>
            <person name="Nilsson R."/>
            <person name="Nishiguchi S."/>
            <person name="Nishikawa S."/>
            <person name="Nori F."/>
            <person name="Ohara O."/>
            <person name="Okazaki Y."/>
            <person name="Orlando V."/>
            <person name="Pang K.C."/>
            <person name="Pavan W.J."/>
            <person name="Pavesi G."/>
            <person name="Pesole G."/>
            <person name="Petrovsky N."/>
            <person name="Piazza S."/>
            <person name="Reed J."/>
            <person name="Reid J.F."/>
            <person name="Ring B.Z."/>
            <person name="Ringwald M."/>
            <person name="Rost B."/>
            <person name="Ruan Y."/>
            <person name="Salzberg S.L."/>
            <person name="Sandelin A."/>
            <person name="Schneider C."/>
            <person name="Schoenbach C."/>
            <person name="Sekiguchi K."/>
            <person name="Semple C.A."/>
            <person name="Seno S."/>
            <person name="Sessa L."/>
            <person name="Sheng Y."/>
            <person name="Shibata Y."/>
            <person name="Shimada H."/>
            <person name="Shimada K."/>
            <person name="Silva D."/>
            <person name="Sinclair B."/>
            <person name="Sperling S."/>
            <person name="Stupka E."/>
            <person name="Sugiura K."/>
            <person name="Sultana R."/>
            <person name="Takenaka Y."/>
            <person name="Taki K."/>
            <person name="Tammoja K."/>
            <person name="Tan S.L."/>
            <person name="Tang S."/>
            <person name="Taylor M.S."/>
            <person name="Tegner J."/>
            <person name="Teichmann S.A."/>
            <person name="Ueda H.R."/>
            <person name="van Nimwegen E."/>
            <person name="Verardo R."/>
            <person name="Wei C.L."/>
            <person name="Yagi K."/>
            <person name="Yamanishi H."/>
            <person name="Zabarovsky E."/>
            <person name="Zhu S."/>
            <person name="Zimmer A."/>
            <person name="Hide W."/>
            <person name="Bult C."/>
            <person name="Grimmond S.M."/>
            <person name="Teasdale R.D."/>
            <person name="Liu E.T."/>
            <person name="Brusic V."/>
            <person name="Quackenbush J."/>
            <person name="Wahlestedt C."/>
            <person name="Mattick J.S."/>
            <person name="Hume D.A."/>
            <person name="Kai C."/>
            <person name="Sasaki D."/>
            <person name="Tomaru Y."/>
            <person name="Fukuda S."/>
            <person name="Kanamori-Katayama M."/>
            <person name="Suzuki M."/>
            <person name="Aoki J."/>
            <person name="Arakawa T."/>
            <person name="Iida J."/>
            <person name="Imamura K."/>
            <person name="Itoh M."/>
            <person name="Kato T."/>
            <person name="Kawaji H."/>
            <person name="Kawagashira N."/>
            <person name="Kawashima T."/>
            <person name="Kojima M."/>
            <person name="Kondo S."/>
            <person name="Konno H."/>
            <person name="Nakano K."/>
            <person name="Ninomiya N."/>
            <person name="Nishio T."/>
            <person name="Okada M."/>
            <person name="Plessy C."/>
            <person name="Shibata K."/>
            <person name="Shiraki T."/>
            <person name="Suzuki S."/>
            <person name="Tagami M."/>
            <person name="Waki K."/>
            <person name="Watahiki A."/>
            <person name="Okamura-Oho Y."/>
            <person name="Suzuki H."/>
            <person name="Kawai J."/>
            <person name="Hayashizaki Y."/>
        </authorList>
    </citation>
    <scope>NUCLEOTIDE SEQUENCE [LARGE SCALE MRNA]</scope>
    <source>
        <strain>C57BL/6J</strain>
        <tissue>Skin</tissue>
    </source>
</reference>
<reference key="2">
    <citation type="journal article" date="2004" name="Genome Res.">
        <title>The status, quality, and expansion of the NIH full-length cDNA project: the Mammalian Gene Collection (MGC).</title>
        <authorList>
            <consortium name="The MGC Project Team"/>
        </authorList>
    </citation>
    <scope>NUCLEOTIDE SEQUENCE [LARGE SCALE MRNA]</scope>
</reference>
<reference key="3">
    <citation type="journal article" date="2009" name="Immunity">
        <title>The phagosomal proteome in interferon-gamma-activated macrophages.</title>
        <authorList>
            <person name="Trost M."/>
            <person name="English L."/>
            <person name="Lemieux S."/>
            <person name="Courcelles M."/>
            <person name="Desjardins M."/>
            <person name="Thibault P."/>
        </authorList>
    </citation>
    <scope>PHOSPHORYLATION [LARGE SCALE ANALYSIS] AT TYR-70; SER-80 AND SER-91</scope>
    <scope>IDENTIFICATION BY MASS SPECTROMETRY [LARGE SCALE ANALYSIS]</scope>
</reference>
<reference key="4">
    <citation type="journal article" date="2009" name="Nat. Biotechnol.">
        <title>Mass-spectrometric identification and relative quantification of N-linked cell surface glycoproteins.</title>
        <authorList>
            <person name="Wollscheid B."/>
            <person name="Bausch-Fluck D."/>
            <person name="Henderson C."/>
            <person name="O'Brien R."/>
            <person name="Bibel M."/>
            <person name="Schiess R."/>
            <person name="Aebersold R."/>
            <person name="Watts J.D."/>
        </authorList>
    </citation>
    <scope>GLYCOSYLATION [LARGE SCALE ANALYSIS] AT ASN-447 AND ASN-682</scope>
</reference>
<reference key="5">
    <citation type="journal article" date="2010" name="Cell">
        <title>A tissue-specific atlas of mouse protein phosphorylation and expression.</title>
        <authorList>
            <person name="Huttlin E.L."/>
            <person name="Jedrychowski M.P."/>
            <person name="Elias J.E."/>
            <person name="Goswami T."/>
            <person name="Rad R."/>
            <person name="Beausoleil S.A."/>
            <person name="Villen J."/>
            <person name="Haas W."/>
            <person name="Sowa M.E."/>
            <person name="Gygi S.P."/>
        </authorList>
    </citation>
    <scope>PHOSPHORYLATION [LARGE SCALE ANALYSIS] AT SER-80</scope>
    <scope>IDENTIFICATION BY MASS SPECTROMETRY [LARGE SCALE ANALYSIS]</scope>
    <source>
        <tissue>Brain</tissue>
        <tissue>Brown adipose tissue</tissue>
        <tissue>Heart</tissue>
        <tissue>Kidney</tissue>
        <tissue>Liver</tissue>
        <tissue>Lung</tissue>
        <tissue>Pancreas</tissue>
        <tissue>Spleen</tissue>
        <tissue>Testis</tissue>
    </source>
</reference>
<proteinExistence type="evidence at protein level"/>
<name>LCAP_MOUSE</name>
<evidence type="ECO:0000250" key="1"/>
<evidence type="ECO:0000250" key="2">
    <source>
        <dbReference type="UniProtKB" id="Q9UIQ6"/>
    </source>
</evidence>
<evidence type="ECO:0000255" key="3"/>
<evidence type="ECO:0000255" key="4">
    <source>
        <dbReference type="PROSITE-ProRule" id="PRU10095"/>
    </source>
</evidence>
<evidence type="ECO:0000269" key="5">
    <source>
    </source>
</evidence>
<evidence type="ECO:0000305" key="6"/>
<evidence type="ECO:0007744" key="7">
    <source>
    </source>
</evidence>
<evidence type="ECO:0007744" key="8">
    <source>
    </source>
</evidence>
<protein>
    <recommendedName>
        <fullName>Leucyl-cystinyl aminopeptidase</fullName>
        <shortName>Cystinyl aminopeptidase</shortName>
        <ecNumber>3.4.11.3</ecNumber>
    </recommendedName>
    <alternativeName>
        <fullName>Oxytocinase</fullName>
        <shortName>OTase</shortName>
    </alternativeName>
</protein>
<feature type="chain" id="PRO_0000278198" description="Leucyl-cystinyl aminopeptidase">
    <location>
        <begin position="1"/>
        <end position="1025"/>
    </location>
</feature>
<feature type="topological domain" description="Cytoplasmic" evidence="3">
    <location>
        <begin position="1"/>
        <end position="109"/>
    </location>
</feature>
<feature type="transmembrane region" description="Helical; Signal-anchor for type II membrane protein" evidence="3">
    <location>
        <begin position="110"/>
        <end position="131"/>
    </location>
</feature>
<feature type="topological domain" description="Extracellular" evidence="3">
    <location>
        <begin position="132"/>
        <end position="1025"/>
    </location>
</feature>
<feature type="region of interest" description="Tankyrase binding" evidence="1">
    <location>
        <begin position="96"/>
        <end position="101"/>
    </location>
</feature>
<feature type="short sequence motif" description="Dileucine internalization motif" evidence="3">
    <location>
        <begin position="53"/>
        <end position="54"/>
    </location>
</feature>
<feature type="short sequence motif" description="Dileucine internalization motif" evidence="3">
    <location>
        <begin position="76"/>
        <end position="77"/>
    </location>
</feature>
<feature type="active site" description="Proton acceptor" evidence="4">
    <location>
        <position position="465"/>
    </location>
</feature>
<feature type="binding site" evidence="1">
    <location>
        <position position="295"/>
    </location>
    <ligand>
        <name>substrate</name>
    </ligand>
</feature>
<feature type="binding site" evidence="1">
    <location>
        <begin position="428"/>
        <end position="432"/>
    </location>
    <ligand>
        <name>substrate</name>
    </ligand>
</feature>
<feature type="binding site" evidence="4">
    <location>
        <position position="464"/>
    </location>
    <ligand>
        <name>Zn(2+)</name>
        <dbReference type="ChEBI" id="CHEBI:29105"/>
        <note>catalytic</note>
    </ligand>
</feature>
<feature type="binding site" evidence="4">
    <location>
        <position position="468"/>
    </location>
    <ligand>
        <name>Zn(2+)</name>
        <dbReference type="ChEBI" id="CHEBI:29105"/>
        <note>catalytic</note>
    </ligand>
</feature>
<feature type="binding site" evidence="4">
    <location>
        <position position="487"/>
    </location>
    <ligand>
        <name>Zn(2+)</name>
        <dbReference type="ChEBI" id="CHEBI:29105"/>
        <note>catalytic</note>
    </ligand>
</feature>
<feature type="site" description="Transition state stabilizer" evidence="1">
    <location>
        <position position="549"/>
    </location>
</feature>
<feature type="modified residue" description="N-acetylmethionine" evidence="2">
    <location>
        <position position="1"/>
    </location>
</feature>
<feature type="modified residue" description="Phosphotyrosine" evidence="7">
    <location>
        <position position="70"/>
    </location>
</feature>
<feature type="modified residue" description="Phosphoserine" evidence="7 8">
    <location>
        <position position="80"/>
    </location>
</feature>
<feature type="modified residue" description="Phosphoserine" evidence="7">
    <location>
        <position position="91"/>
    </location>
</feature>
<feature type="glycosylation site" description="N-linked (GlcNAc...) asparagine" evidence="3">
    <location>
        <position position="145"/>
    </location>
</feature>
<feature type="glycosylation site" description="N-linked (GlcNAc...) asparagine" evidence="3">
    <location>
        <position position="184"/>
    </location>
</feature>
<feature type="glycosylation site" description="N-linked (GlcNAc...) asparagine" evidence="3">
    <location>
        <position position="215"/>
    </location>
</feature>
<feature type="glycosylation site" description="N-linked (GlcNAc...) asparagine" evidence="3">
    <location>
        <position position="256"/>
    </location>
</feature>
<feature type="glycosylation site" description="N-linked (GlcNAc...) asparagine" evidence="3">
    <location>
        <position position="266"/>
    </location>
</feature>
<feature type="glycosylation site" description="N-linked (GlcNAc...) asparagine" evidence="3">
    <location>
        <position position="368"/>
    </location>
</feature>
<feature type="glycosylation site" description="N-linked (GlcNAc...) asparagine" evidence="3">
    <location>
        <position position="374"/>
    </location>
</feature>
<feature type="glycosylation site" description="N-linked (GlcNAc...) asparagine" evidence="5">
    <location>
        <position position="447"/>
    </location>
</feature>
<feature type="glycosylation site" description="N-linked (GlcNAc...) asparagine" evidence="3">
    <location>
        <position position="525"/>
    </location>
</feature>
<feature type="glycosylation site" description="N-linked (GlcNAc...) asparagine" evidence="3">
    <location>
        <position position="578"/>
    </location>
</feature>
<feature type="glycosylation site" description="N-linked (GlcNAc...) asparagine" evidence="3">
    <location>
        <position position="664"/>
    </location>
</feature>
<feature type="glycosylation site" description="N-linked (GlcNAc...) asparagine" evidence="5">
    <location>
        <position position="682"/>
    </location>
</feature>
<feature type="glycosylation site" description="N-linked (GlcNAc...) asparagine" evidence="3">
    <location>
        <position position="695"/>
    </location>
</feature>
<feature type="glycosylation site" description="N-linked (GlcNAc...) asparagine" evidence="3">
    <location>
        <position position="758"/>
    </location>
</feature>
<feature type="glycosylation site" description="N-linked (GlcNAc...) asparagine" evidence="3">
    <location>
        <position position="834"/>
    </location>
</feature>
<feature type="glycosylation site" description="N-linked (GlcNAc...) asparagine" evidence="3">
    <location>
        <position position="850"/>
    </location>
</feature>
<feature type="glycosylation site" description="N-linked (GlcNAc...) asparagine" evidence="3">
    <location>
        <position position="989"/>
    </location>
</feature>
<keyword id="KW-0007">Acetylation</keyword>
<keyword id="KW-0031">Aminopeptidase</keyword>
<keyword id="KW-1003">Cell membrane</keyword>
<keyword id="KW-0325">Glycoprotein</keyword>
<keyword id="KW-0378">Hydrolase</keyword>
<keyword id="KW-0472">Membrane</keyword>
<keyword id="KW-0479">Metal-binding</keyword>
<keyword id="KW-0482">Metalloprotease</keyword>
<keyword id="KW-0597">Phosphoprotein</keyword>
<keyword id="KW-0645">Protease</keyword>
<keyword id="KW-1185">Reference proteome</keyword>
<keyword id="KW-0735">Signal-anchor</keyword>
<keyword id="KW-0812">Transmembrane</keyword>
<keyword id="KW-1133">Transmembrane helix</keyword>
<keyword id="KW-0862">Zinc</keyword>
<comment type="function">
    <text evidence="1">Release of an N-terminal amino acid, cleave before cysteine, leucine as well as other amino acids. Degrades peptide hormones such as oxytocin, vasopressin and angiotensin III, and plays a role in maintaining homeostasis during pregnancy. May be involved in the inactivation of neuronal peptides in the brain. Cleaves Met-enkephalin and dynorphin. Binds angiotensin IV and may be the angiotensin IV receptor in the brain (By similarity).</text>
</comment>
<comment type="catalytic activity">
    <reaction>
        <text>Release of an N-terminal amino acid, Cys-|-Xaa-, in which the half-cystine residue is involved in a disulfide loop, notably in oxytocin or vasopressin. Hydrolysis rates on a range of aminoacyl arylamides exceed that for the cystinyl derivative, however.</text>
        <dbReference type="EC" id="3.4.11.3"/>
    </reaction>
</comment>
<comment type="cofactor">
    <cofactor evidence="1">
        <name>Zn(2+)</name>
        <dbReference type="ChEBI" id="CHEBI:29105"/>
    </cofactor>
    <text evidence="1">Binds 1 zinc ion per subunit.</text>
</comment>
<comment type="subunit">
    <text evidence="1">Homodimer. Binds tankyrases 1 and 2 (By similarity).</text>
</comment>
<comment type="subcellular location">
    <subcellularLocation>
        <location evidence="1">Cell membrane</location>
        <topology evidence="1">Single-pass type II membrane protein</topology>
    </subcellularLocation>
    <subcellularLocation>
        <location evidence="1">Endomembrane system</location>
        <topology evidence="1">Single-pass type II membrane protein</topology>
    </subcellularLocation>
    <text evidence="1">Localized mainly in intracellular vesicles together with GLUT4. Relocalizes to the plasma membrane in response to insulin. The dileucine internalization motif and/or the interaction with tankyrases may be involved in intracellular sequestration (By similarity).</text>
</comment>
<comment type="similarity">
    <text evidence="6">Belongs to the peptidase M1 family.</text>
</comment>
<gene>
    <name type="primary">Lnpep</name>
</gene>
<organism>
    <name type="scientific">Mus musculus</name>
    <name type="common">Mouse</name>
    <dbReference type="NCBI Taxonomy" id="10090"/>
    <lineage>
        <taxon>Eukaryota</taxon>
        <taxon>Metazoa</taxon>
        <taxon>Chordata</taxon>
        <taxon>Craniata</taxon>
        <taxon>Vertebrata</taxon>
        <taxon>Euteleostomi</taxon>
        <taxon>Mammalia</taxon>
        <taxon>Eutheria</taxon>
        <taxon>Euarchontoglires</taxon>
        <taxon>Glires</taxon>
        <taxon>Rodentia</taxon>
        <taxon>Myomorpha</taxon>
        <taxon>Muroidea</taxon>
        <taxon>Muridae</taxon>
        <taxon>Murinae</taxon>
        <taxon>Mus</taxon>
        <taxon>Mus</taxon>
    </lineage>
</organism>
<accession>Q8C129</accession>
<sequence length="1025" mass="117304">MESFTNDRLQLPRNMIENSMFEEEPDVVDLAKEPCLHPLEPDEVEYEPRGSRLLVRGLGEHEMDEDEEDYESSAKLLGMSFMNRSSGLRNSAAGYRQSPDGTCSLPSARTLVICVFVIVVAVSVIMVIYLLPRCTFTKEGCHKTNQSAELIQPVATNGKVFPWAQIRLPTAIIPLCYELSLHPNLTSMTFRGSVTISLQALQDTRDIILHSTGHNISRVTFMSAVSSQEKQVEILEYPYHEQIAVVAPEPLLTGHNYTLKIEYSANISNSYYGFYGITYTDKSNEKKYFAATQFEPLAARSAFPCFDEPAFKATFIIKITRNEHHTALSNMPKKSSVPAEEGLIQDEFSESVKMSTYLVAFIVGEMRNLSQDVNGTLVSVYAVPEKIGQVHHALDTTIKLLEFYQTYFEIQYPLKKLDLVAIPDFEAGAMENWGLLTFREETLLYDNATSSVADRKLVTKIIAHELAHQWFGNLVTMQWWNDLWLNEGFATFMEYFSVEKIFKELNSYEDFLDARFKTMRKDSLNSSHPISSSVQSSEQIEEMFDSLSYFKGASLLLMLKSYLSEDVFRHAVILYLHNHSYAAIQSDDLWDSFNEVTDKTLDVKKMMKTWTLQKGFPLVTVQRKGTELLLQQERFFLRMQPESQPSDTSHLWHIPISYVTDGRNYSEYRSVSLLDKKSDVINLTEQVQWVKVNSNMTGYYIVHYAHDDWTALINQLKRNPYVLSDKDRANLINNIFELAGLGKVPLRMAFDLIDYLKNETHTAPITEALFQTNLIYNLLEKLGHMDLSSRLVARVHKLLQNQIQQQTWTDEGTPSMRELRSALLEFACAHSLENCTTMATNLFDSWMASNGTQSLPTDVMVTVFKVGARTEKGWLFLFSMYSSMGSEAEKNKILEALASSEDVHKLYWLMKSSLDGDIIRTQKLSLIIRTVGRHFPGHLLAWDFVKENWNKLVHKFHLGSYTIQSIVAGSTHLFSTKTHLSEVQAFFENQSEATLKLRCVQEALEVIQLNIQWMVRNLKTLSQWL</sequence>
<dbReference type="EC" id="3.4.11.3"/>
<dbReference type="EMBL" id="AK029094">
    <property type="protein sequence ID" value="BAC26293.1"/>
    <property type="molecule type" value="mRNA"/>
</dbReference>
<dbReference type="EMBL" id="BC120925">
    <property type="protein sequence ID" value="AAI20926.1"/>
    <property type="molecule type" value="mRNA"/>
</dbReference>
<dbReference type="EMBL" id="BC120926">
    <property type="protein sequence ID" value="AAI20927.1"/>
    <property type="molecule type" value="mRNA"/>
</dbReference>
<dbReference type="CCDS" id="CCDS37457.1"/>
<dbReference type="RefSeq" id="NP_766415.1">
    <property type="nucleotide sequence ID" value="NM_172827.3"/>
</dbReference>
<dbReference type="SMR" id="Q8C129"/>
<dbReference type="BioGRID" id="232146">
    <property type="interactions" value="12"/>
</dbReference>
<dbReference type="FunCoup" id="Q8C129">
    <property type="interactions" value="1477"/>
</dbReference>
<dbReference type="STRING" id="10090.ENSMUSP00000036998"/>
<dbReference type="ChEMBL" id="CHEMBL4105715"/>
<dbReference type="MEROPS" id="M01.011"/>
<dbReference type="GlyConnect" id="2477">
    <property type="glycosylation" value="16 N-Linked glycans (6 sites)"/>
</dbReference>
<dbReference type="GlyCosmos" id="Q8C129">
    <property type="glycosylation" value="17 sites, 16 glycans"/>
</dbReference>
<dbReference type="GlyGen" id="Q8C129">
    <property type="glycosylation" value="20 sites, 24 N-linked glycans (11 sites), 1 O-linked glycan (1 site)"/>
</dbReference>
<dbReference type="iPTMnet" id="Q8C129"/>
<dbReference type="PhosphoSitePlus" id="Q8C129"/>
<dbReference type="SwissPalm" id="Q8C129"/>
<dbReference type="jPOST" id="Q8C129"/>
<dbReference type="PaxDb" id="10090-ENSMUSP00000036998"/>
<dbReference type="PeptideAtlas" id="Q8C129"/>
<dbReference type="ProteomicsDB" id="286179"/>
<dbReference type="Pumba" id="Q8C129"/>
<dbReference type="Antibodypedia" id="25094">
    <property type="antibodies" value="141 antibodies from 32 providers"/>
</dbReference>
<dbReference type="DNASU" id="240028"/>
<dbReference type="Ensembl" id="ENSMUST00000041047.4">
    <property type="protein sequence ID" value="ENSMUSP00000036998.3"/>
    <property type="gene ID" value="ENSMUSG00000023845.8"/>
</dbReference>
<dbReference type="GeneID" id="240028"/>
<dbReference type="KEGG" id="mmu:240028"/>
<dbReference type="UCSC" id="uc008apk.1">
    <property type="organism name" value="mouse"/>
</dbReference>
<dbReference type="AGR" id="MGI:2387123"/>
<dbReference type="CTD" id="4012"/>
<dbReference type="MGI" id="MGI:2387123">
    <property type="gene designation" value="Lnpep"/>
</dbReference>
<dbReference type="VEuPathDB" id="HostDB:ENSMUSG00000023845"/>
<dbReference type="eggNOG" id="KOG1046">
    <property type="taxonomic scope" value="Eukaryota"/>
</dbReference>
<dbReference type="GeneTree" id="ENSGT00940000157902"/>
<dbReference type="HOGENOM" id="CLU_003705_2_2_1"/>
<dbReference type="InParanoid" id="Q8C129"/>
<dbReference type="OMA" id="AWDFIQV"/>
<dbReference type="OrthoDB" id="10031169at2759"/>
<dbReference type="PhylomeDB" id="Q8C129"/>
<dbReference type="TreeFam" id="TF300395"/>
<dbReference type="BRENDA" id="3.4.11.3">
    <property type="organism ID" value="3474"/>
</dbReference>
<dbReference type="Reactome" id="R-MMU-1236977">
    <property type="pathway name" value="Endosomal/Vacuolar pathway"/>
</dbReference>
<dbReference type="Reactome" id="R-MMU-983168">
    <property type="pathway name" value="Antigen processing: Ubiquitination &amp; Proteasome degradation"/>
</dbReference>
<dbReference type="BioGRID-ORCS" id="240028">
    <property type="hits" value="4 hits in 81 CRISPR screens"/>
</dbReference>
<dbReference type="ChiTaRS" id="Lnpep">
    <property type="organism name" value="mouse"/>
</dbReference>
<dbReference type="PRO" id="PR:Q8C129"/>
<dbReference type="Proteomes" id="UP000000589">
    <property type="component" value="Chromosome 17"/>
</dbReference>
<dbReference type="RNAct" id="Q8C129">
    <property type="molecule type" value="protein"/>
</dbReference>
<dbReference type="Bgee" id="ENSMUSG00000023845">
    <property type="expression patterns" value="Expressed in ascending aorta and 216 other cell types or tissues"/>
</dbReference>
<dbReference type="GO" id="GO:0030659">
    <property type="term" value="C:cytoplasmic vesicle membrane"/>
    <property type="evidence" value="ECO:0000314"/>
    <property type="project" value="MGI"/>
</dbReference>
<dbReference type="GO" id="GO:0012505">
    <property type="term" value="C:endomembrane system"/>
    <property type="evidence" value="ECO:0007669"/>
    <property type="project" value="UniProtKB-SubCell"/>
</dbReference>
<dbReference type="GO" id="GO:0016020">
    <property type="term" value="C:membrane"/>
    <property type="evidence" value="ECO:0000315"/>
    <property type="project" value="MGI"/>
</dbReference>
<dbReference type="GO" id="GO:0048471">
    <property type="term" value="C:perinuclear region of cytoplasm"/>
    <property type="evidence" value="ECO:0000314"/>
    <property type="project" value="MGI"/>
</dbReference>
<dbReference type="GO" id="GO:0005886">
    <property type="term" value="C:plasma membrane"/>
    <property type="evidence" value="ECO:0000314"/>
    <property type="project" value="MGI"/>
</dbReference>
<dbReference type="GO" id="GO:0004177">
    <property type="term" value="F:aminopeptidase activity"/>
    <property type="evidence" value="ECO:0000315"/>
    <property type="project" value="MGI"/>
</dbReference>
<dbReference type="GO" id="GO:0008237">
    <property type="term" value="F:metallopeptidase activity"/>
    <property type="evidence" value="ECO:0007669"/>
    <property type="project" value="UniProtKB-KW"/>
</dbReference>
<dbReference type="GO" id="GO:0008270">
    <property type="term" value="F:zinc ion binding"/>
    <property type="evidence" value="ECO:0007669"/>
    <property type="project" value="InterPro"/>
</dbReference>
<dbReference type="GO" id="GO:0120163">
    <property type="term" value="P:negative regulation of cold-induced thermogenesis"/>
    <property type="evidence" value="ECO:0000315"/>
    <property type="project" value="YuBioLab"/>
</dbReference>
<dbReference type="GO" id="GO:0030163">
    <property type="term" value="P:protein catabolic process"/>
    <property type="evidence" value="ECO:0000315"/>
    <property type="project" value="MGI"/>
</dbReference>
<dbReference type="GO" id="GO:0006508">
    <property type="term" value="P:proteolysis"/>
    <property type="evidence" value="ECO:0007669"/>
    <property type="project" value="UniProtKB-KW"/>
</dbReference>
<dbReference type="CDD" id="cd09601">
    <property type="entry name" value="M1_APN-Q_like"/>
    <property type="match status" value="1"/>
</dbReference>
<dbReference type="FunFam" id="1.10.390.10:FF:000010">
    <property type="entry name" value="Leucyl-cystinyl aminopeptidase"/>
    <property type="match status" value="1"/>
</dbReference>
<dbReference type="FunFam" id="1.25.50.20:FF:000003">
    <property type="entry name" value="Leucyl-cystinyl aminopeptidase"/>
    <property type="match status" value="1"/>
</dbReference>
<dbReference type="FunFam" id="2.60.40.1730:FF:000001">
    <property type="entry name" value="Leucyl-cystinyl aminopeptidase"/>
    <property type="match status" value="1"/>
</dbReference>
<dbReference type="FunFam" id="2.60.40.1910:FF:000001">
    <property type="entry name" value="Leucyl-cystinyl aminopeptidase"/>
    <property type="match status" value="1"/>
</dbReference>
<dbReference type="Gene3D" id="1.25.50.20">
    <property type="match status" value="1"/>
</dbReference>
<dbReference type="Gene3D" id="2.60.40.1910">
    <property type="match status" value="1"/>
</dbReference>
<dbReference type="Gene3D" id="1.10.390.10">
    <property type="entry name" value="Neutral Protease Domain 2"/>
    <property type="match status" value="1"/>
</dbReference>
<dbReference type="Gene3D" id="2.60.40.1730">
    <property type="entry name" value="tricorn interacting facor f3 domain"/>
    <property type="match status" value="1"/>
</dbReference>
<dbReference type="InterPro" id="IPR045357">
    <property type="entry name" value="Aminopeptidase_N-like_N"/>
</dbReference>
<dbReference type="InterPro" id="IPR042097">
    <property type="entry name" value="Aminopeptidase_N-like_N_sf"/>
</dbReference>
<dbReference type="InterPro" id="IPR024571">
    <property type="entry name" value="ERAP1-like_C_dom"/>
</dbReference>
<dbReference type="InterPro" id="IPR034016">
    <property type="entry name" value="M1_APN-typ"/>
</dbReference>
<dbReference type="InterPro" id="IPR001930">
    <property type="entry name" value="Peptidase_M1"/>
</dbReference>
<dbReference type="InterPro" id="IPR050344">
    <property type="entry name" value="Peptidase_M1_aminopeptidases"/>
</dbReference>
<dbReference type="InterPro" id="IPR014782">
    <property type="entry name" value="Peptidase_M1_dom"/>
</dbReference>
<dbReference type="InterPro" id="IPR027268">
    <property type="entry name" value="Peptidase_M4/M1_CTD_sf"/>
</dbReference>
<dbReference type="PANTHER" id="PTHR11533:SF42">
    <property type="entry name" value="LEUCYL-CYSTINYL AMINOPEPTIDASE"/>
    <property type="match status" value="1"/>
</dbReference>
<dbReference type="PANTHER" id="PTHR11533">
    <property type="entry name" value="PROTEASE M1 ZINC METALLOPROTEASE"/>
    <property type="match status" value="1"/>
</dbReference>
<dbReference type="Pfam" id="PF11838">
    <property type="entry name" value="ERAP1_C"/>
    <property type="match status" value="1"/>
</dbReference>
<dbReference type="Pfam" id="PF01433">
    <property type="entry name" value="Peptidase_M1"/>
    <property type="match status" value="1"/>
</dbReference>
<dbReference type="Pfam" id="PF17900">
    <property type="entry name" value="Peptidase_M1_N"/>
    <property type="match status" value="1"/>
</dbReference>
<dbReference type="PRINTS" id="PR00756">
    <property type="entry name" value="ALADIPTASE"/>
</dbReference>
<dbReference type="SUPFAM" id="SSF63737">
    <property type="entry name" value="Leukotriene A4 hydrolase N-terminal domain"/>
    <property type="match status" value="1"/>
</dbReference>
<dbReference type="SUPFAM" id="SSF55486">
    <property type="entry name" value="Metalloproteases ('zincins'), catalytic domain"/>
    <property type="match status" value="1"/>
</dbReference>
<dbReference type="PROSITE" id="PS00142">
    <property type="entry name" value="ZINC_PROTEASE"/>
    <property type="match status" value="1"/>
</dbReference>